<evidence type="ECO:0000255" key="1">
    <source>
        <dbReference type="HAMAP-Rule" id="MF_00141"/>
    </source>
</evidence>
<evidence type="ECO:0000305" key="2"/>
<sequence>MASFSTNEFRSGMKIMLDNEPCVIIENEFVKPGKGQAFSRVKIRKLLSGKVLEKTFKSGESVEAADVVEVELDYLYNDGEFYHFMDNVSFEQIAADVKAVGDNAKWLVENNTCTLTLWNGNPIIVTPPNFVELEVTETDPGLKGDTQGTGGKPATLITGAVVRVPLFIQIGEVIKADTRSGEYVSRVK</sequence>
<feature type="chain" id="PRO_0000094304" description="Elongation factor P">
    <location>
        <begin position="1"/>
        <end position="188"/>
    </location>
</feature>
<feature type="modified residue" description="N6-(3,6-diaminohexanoyl)-5-hydroxylysine" evidence="1">
    <location>
        <position position="34"/>
    </location>
</feature>
<organism>
    <name type="scientific">Photobacterium profundum (strain SS9)</name>
    <dbReference type="NCBI Taxonomy" id="298386"/>
    <lineage>
        <taxon>Bacteria</taxon>
        <taxon>Pseudomonadati</taxon>
        <taxon>Pseudomonadota</taxon>
        <taxon>Gammaproteobacteria</taxon>
        <taxon>Vibrionales</taxon>
        <taxon>Vibrionaceae</taxon>
        <taxon>Photobacterium</taxon>
    </lineage>
</organism>
<dbReference type="EMBL" id="CR378673">
    <property type="protein sequence ID" value="CAG21667.1"/>
    <property type="status" value="ALT_INIT"/>
    <property type="molecule type" value="Genomic_DNA"/>
</dbReference>
<dbReference type="RefSeq" id="WP_011219913.1">
    <property type="nucleotide sequence ID" value="NC_006370.1"/>
</dbReference>
<dbReference type="SMR" id="Q6LM11"/>
<dbReference type="STRING" id="298386.PBPRA3382"/>
<dbReference type="KEGG" id="ppr:PBPRA3382"/>
<dbReference type="eggNOG" id="COG0231">
    <property type="taxonomic scope" value="Bacteria"/>
</dbReference>
<dbReference type="HOGENOM" id="CLU_074944_0_0_6"/>
<dbReference type="UniPathway" id="UPA00345"/>
<dbReference type="Proteomes" id="UP000000593">
    <property type="component" value="Chromosome 1"/>
</dbReference>
<dbReference type="GO" id="GO:0005737">
    <property type="term" value="C:cytoplasm"/>
    <property type="evidence" value="ECO:0007669"/>
    <property type="project" value="UniProtKB-SubCell"/>
</dbReference>
<dbReference type="GO" id="GO:0003746">
    <property type="term" value="F:translation elongation factor activity"/>
    <property type="evidence" value="ECO:0007669"/>
    <property type="project" value="UniProtKB-UniRule"/>
</dbReference>
<dbReference type="GO" id="GO:0043043">
    <property type="term" value="P:peptide biosynthetic process"/>
    <property type="evidence" value="ECO:0007669"/>
    <property type="project" value="InterPro"/>
</dbReference>
<dbReference type="CDD" id="cd04470">
    <property type="entry name" value="S1_EF-P_repeat_1"/>
    <property type="match status" value="1"/>
</dbReference>
<dbReference type="CDD" id="cd05794">
    <property type="entry name" value="S1_EF-P_repeat_2"/>
    <property type="match status" value="1"/>
</dbReference>
<dbReference type="FunFam" id="2.30.30.30:FF:000003">
    <property type="entry name" value="Elongation factor P"/>
    <property type="match status" value="1"/>
</dbReference>
<dbReference type="FunFam" id="2.40.50.140:FF:000004">
    <property type="entry name" value="Elongation factor P"/>
    <property type="match status" value="1"/>
</dbReference>
<dbReference type="FunFam" id="2.40.50.140:FF:000009">
    <property type="entry name" value="Elongation factor P"/>
    <property type="match status" value="1"/>
</dbReference>
<dbReference type="Gene3D" id="2.30.30.30">
    <property type="match status" value="1"/>
</dbReference>
<dbReference type="Gene3D" id="2.40.50.140">
    <property type="entry name" value="Nucleic acid-binding proteins"/>
    <property type="match status" value="2"/>
</dbReference>
<dbReference type="HAMAP" id="MF_00141">
    <property type="entry name" value="EF_P"/>
    <property type="match status" value="1"/>
</dbReference>
<dbReference type="InterPro" id="IPR015365">
    <property type="entry name" value="Elong-fact-P_C"/>
</dbReference>
<dbReference type="InterPro" id="IPR012340">
    <property type="entry name" value="NA-bd_OB-fold"/>
</dbReference>
<dbReference type="InterPro" id="IPR014722">
    <property type="entry name" value="Rib_uL2_dom2"/>
</dbReference>
<dbReference type="InterPro" id="IPR020599">
    <property type="entry name" value="Transl_elong_fac_P/YeiP"/>
</dbReference>
<dbReference type="InterPro" id="IPR013185">
    <property type="entry name" value="Transl_elong_KOW-like"/>
</dbReference>
<dbReference type="InterPro" id="IPR001059">
    <property type="entry name" value="Transl_elong_P/YeiP_cen"/>
</dbReference>
<dbReference type="InterPro" id="IPR013852">
    <property type="entry name" value="Transl_elong_P/YeiP_CS"/>
</dbReference>
<dbReference type="InterPro" id="IPR011768">
    <property type="entry name" value="Transl_elongation_fac_P"/>
</dbReference>
<dbReference type="InterPro" id="IPR008991">
    <property type="entry name" value="Translation_prot_SH3-like_sf"/>
</dbReference>
<dbReference type="NCBIfam" id="TIGR00038">
    <property type="entry name" value="efp"/>
    <property type="match status" value="1"/>
</dbReference>
<dbReference type="NCBIfam" id="NF001810">
    <property type="entry name" value="PRK00529.1"/>
    <property type="match status" value="1"/>
</dbReference>
<dbReference type="PANTHER" id="PTHR30053">
    <property type="entry name" value="ELONGATION FACTOR P"/>
    <property type="match status" value="1"/>
</dbReference>
<dbReference type="PANTHER" id="PTHR30053:SF12">
    <property type="entry name" value="ELONGATION FACTOR P (EF-P) FAMILY PROTEIN"/>
    <property type="match status" value="1"/>
</dbReference>
<dbReference type="Pfam" id="PF01132">
    <property type="entry name" value="EFP"/>
    <property type="match status" value="1"/>
</dbReference>
<dbReference type="Pfam" id="PF08207">
    <property type="entry name" value="EFP_N"/>
    <property type="match status" value="1"/>
</dbReference>
<dbReference type="Pfam" id="PF09285">
    <property type="entry name" value="Elong-fact-P_C"/>
    <property type="match status" value="1"/>
</dbReference>
<dbReference type="PIRSF" id="PIRSF005901">
    <property type="entry name" value="EF-P"/>
    <property type="match status" value="1"/>
</dbReference>
<dbReference type="SMART" id="SM01185">
    <property type="entry name" value="EFP"/>
    <property type="match status" value="1"/>
</dbReference>
<dbReference type="SMART" id="SM00841">
    <property type="entry name" value="Elong-fact-P_C"/>
    <property type="match status" value="1"/>
</dbReference>
<dbReference type="SUPFAM" id="SSF50249">
    <property type="entry name" value="Nucleic acid-binding proteins"/>
    <property type="match status" value="2"/>
</dbReference>
<dbReference type="SUPFAM" id="SSF50104">
    <property type="entry name" value="Translation proteins SH3-like domain"/>
    <property type="match status" value="1"/>
</dbReference>
<dbReference type="PROSITE" id="PS01275">
    <property type="entry name" value="EFP"/>
    <property type="match status" value="1"/>
</dbReference>
<gene>
    <name evidence="1" type="primary">efp</name>
    <name type="ordered locus">PBPRA3382</name>
</gene>
<comment type="function">
    <text evidence="1">Involved in peptide bond synthesis. Alleviates ribosome stalling that occurs when 3 or more consecutive Pro residues or the sequence PPG is present in a protein, possibly by augmenting the peptidyl transferase activity of the ribosome. Modification of Lys-34 is required for alleviation.</text>
</comment>
<comment type="pathway">
    <text evidence="1">Protein biosynthesis; polypeptide chain elongation.</text>
</comment>
<comment type="subcellular location">
    <subcellularLocation>
        <location evidence="1">Cytoplasm</location>
    </subcellularLocation>
</comment>
<comment type="PTM">
    <text evidence="1">May be beta-lysylated on the epsilon-amino group of Lys-34 by the combined action of EpmA and EpmB, and then hydroxylated on the C5 position of the same residue by EpmC (if this protein is present). Lysylation is critical for the stimulatory effect of EF-P on peptide-bond formation. The lysylation moiety may extend toward the peptidyltransferase center and stabilize the terminal 3-CCA end of the tRNA. Hydroxylation of the C5 position on Lys-34 may allow additional potential stabilizing hydrogen-bond interactions with the P-tRNA.</text>
</comment>
<comment type="similarity">
    <text evidence="1">Belongs to the elongation factor P family.</text>
</comment>
<comment type="sequence caution" evidence="2">
    <conflict type="erroneous initiation">
        <sequence resource="EMBL-CDS" id="CAG21667"/>
    </conflict>
    <text>Extended N-terminus.</text>
</comment>
<protein>
    <recommendedName>
        <fullName evidence="1">Elongation factor P</fullName>
        <shortName evidence="1">EF-P</shortName>
    </recommendedName>
</protein>
<accession>Q6LM11</accession>
<proteinExistence type="inferred from homology"/>
<keyword id="KW-0963">Cytoplasm</keyword>
<keyword id="KW-0251">Elongation factor</keyword>
<keyword id="KW-0379">Hydroxylation</keyword>
<keyword id="KW-0648">Protein biosynthesis</keyword>
<keyword id="KW-1185">Reference proteome</keyword>
<reference key="1">
    <citation type="journal article" date="2005" name="Science">
        <title>Life at depth: Photobacterium profundum genome sequence and expression analysis.</title>
        <authorList>
            <person name="Vezzi A."/>
            <person name="Campanaro S."/>
            <person name="D'Angelo M."/>
            <person name="Simonato F."/>
            <person name="Vitulo N."/>
            <person name="Lauro F.M."/>
            <person name="Cestaro A."/>
            <person name="Malacrida G."/>
            <person name="Simionati B."/>
            <person name="Cannata N."/>
            <person name="Romualdi C."/>
            <person name="Bartlett D.H."/>
            <person name="Valle G."/>
        </authorList>
    </citation>
    <scope>NUCLEOTIDE SEQUENCE [LARGE SCALE GENOMIC DNA]</scope>
    <source>
        <strain>ATCC BAA-1253 / SS9</strain>
    </source>
</reference>
<name>EFP_PHOPR</name>